<protein>
    <recommendedName>
        <fullName>ATP-dependent clpX-like chaperone, mitochondrial</fullName>
        <ecNumber evidence="9 11">3.6.4.10</ecNumber>
    </recommendedName>
    <alternativeName>
        <fullName evidence="12">ATP-dependent Clp protease ATP-binding subunit clpX-like, mitochondrial</fullName>
    </alternativeName>
    <alternativeName>
        <fullName evidence="13">Caseinolytic mitochondrial matrix peptidase chaperone subunit X</fullName>
    </alternativeName>
</protein>
<dbReference type="EC" id="3.6.4.10" evidence="9 11"/>
<dbReference type="EMBL" id="AJ006267">
    <property type="protein sequence ID" value="CAA06933.2"/>
    <property type="molecule type" value="mRNA"/>
</dbReference>
<dbReference type="EMBL" id="AJ276980">
    <property type="protein sequence ID" value="CAC01291.1"/>
    <property type="molecule type" value="Genomic_DNA"/>
</dbReference>
<dbReference type="EMBL" id="AJ276981">
    <property type="protein sequence ID" value="CAC01291.1"/>
    <property type="status" value="JOINED"/>
    <property type="molecule type" value="Genomic_DNA"/>
</dbReference>
<dbReference type="EMBL" id="AJ276966">
    <property type="protein sequence ID" value="CAC01291.1"/>
    <property type="status" value="JOINED"/>
    <property type="molecule type" value="Genomic_DNA"/>
</dbReference>
<dbReference type="EMBL" id="AJ276967">
    <property type="protein sequence ID" value="CAC01291.1"/>
    <property type="status" value="JOINED"/>
    <property type="molecule type" value="Genomic_DNA"/>
</dbReference>
<dbReference type="EMBL" id="AJ276968">
    <property type="protein sequence ID" value="CAC01291.1"/>
    <property type="status" value="JOINED"/>
    <property type="molecule type" value="Genomic_DNA"/>
</dbReference>
<dbReference type="EMBL" id="AJ276969">
    <property type="protein sequence ID" value="CAC01291.1"/>
    <property type="status" value="JOINED"/>
    <property type="molecule type" value="Genomic_DNA"/>
</dbReference>
<dbReference type="EMBL" id="AJ276970">
    <property type="protein sequence ID" value="CAC01291.1"/>
    <property type="status" value="JOINED"/>
    <property type="molecule type" value="Genomic_DNA"/>
</dbReference>
<dbReference type="EMBL" id="AJ276971">
    <property type="protein sequence ID" value="CAC01291.1"/>
    <property type="status" value="JOINED"/>
    <property type="molecule type" value="Genomic_DNA"/>
</dbReference>
<dbReference type="EMBL" id="AJ276972">
    <property type="protein sequence ID" value="CAC01291.1"/>
    <property type="status" value="JOINED"/>
    <property type="molecule type" value="Genomic_DNA"/>
</dbReference>
<dbReference type="EMBL" id="AJ276973">
    <property type="protein sequence ID" value="CAC01291.1"/>
    <property type="status" value="JOINED"/>
    <property type="molecule type" value="Genomic_DNA"/>
</dbReference>
<dbReference type="EMBL" id="AJ276974">
    <property type="protein sequence ID" value="CAC01291.1"/>
    <property type="status" value="JOINED"/>
    <property type="molecule type" value="Genomic_DNA"/>
</dbReference>
<dbReference type="EMBL" id="AJ276975">
    <property type="protein sequence ID" value="CAC01291.1"/>
    <property type="status" value="JOINED"/>
    <property type="molecule type" value="Genomic_DNA"/>
</dbReference>
<dbReference type="EMBL" id="AJ276976">
    <property type="protein sequence ID" value="CAC01291.1"/>
    <property type="status" value="JOINED"/>
    <property type="molecule type" value="Genomic_DNA"/>
</dbReference>
<dbReference type="EMBL" id="AJ276977">
    <property type="protein sequence ID" value="CAC01291.1"/>
    <property type="status" value="JOINED"/>
    <property type="molecule type" value="Genomic_DNA"/>
</dbReference>
<dbReference type="EMBL" id="AK292316">
    <property type="protein sequence ID" value="BAF85005.1"/>
    <property type="molecule type" value="mRNA"/>
</dbReference>
<dbReference type="EMBL" id="CH471082">
    <property type="protein sequence ID" value="EAW77715.1"/>
    <property type="molecule type" value="Genomic_DNA"/>
</dbReference>
<dbReference type="EMBL" id="BC130373">
    <property type="protein sequence ID" value="AAI30374.1"/>
    <property type="molecule type" value="mRNA"/>
</dbReference>
<dbReference type="EMBL" id="BC136487">
    <property type="protein sequence ID" value="AAI36488.1"/>
    <property type="molecule type" value="mRNA"/>
</dbReference>
<dbReference type="CCDS" id="CCDS10202.1"/>
<dbReference type="RefSeq" id="NP_006651.2">
    <property type="nucleotide sequence ID" value="NM_006660.4"/>
</dbReference>
<dbReference type="SMR" id="O76031"/>
<dbReference type="BioGRID" id="116056">
    <property type="interactions" value="225"/>
</dbReference>
<dbReference type="ComplexPortal" id="CPX-6177">
    <property type="entry name" value="Mitochondrial endopeptidase ClpXP complex"/>
</dbReference>
<dbReference type="CORUM" id="O76031"/>
<dbReference type="DIP" id="DIP-50293N"/>
<dbReference type="FunCoup" id="O76031">
    <property type="interactions" value="2788"/>
</dbReference>
<dbReference type="IntAct" id="O76031">
    <property type="interactions" value="105"/>
</dbReference>
<dbReference type="MINT" id="O76031"/>
<dbReference type="STRING" id="9606.ENSP00000300107"/>
<dbReference type="BindingDB" id="O76031"/>
<dbReference type="ChEMBL" id="CHEMBL3797014"/>
<dbReference type="GlyGen" id="O76031">
    <property type="glycosylation" value="2 sites, 1 O-linked glycan (2 sites)"/>
</dbReference>
<dbReference type="iPTMnet" id="O76031"/>
<dbReference type="PhosphoSitePlus" id="O76031"/>
<dbReference type="SwissPalm" id="O76031"/>
<dbReference type="BioMuta" id="CLPX"/>
<dbReference type="jPOST" id="O76031"/>
<dbReference type="MassIVE" id="O76031"/>
<dbReference type="PaxDb" id="9606-ENSP00000300107"/>
<dbReference type="PeptideAtlas" id="O76031"/>
<dbReference type="ProteomicsDB" id="50351"/>
<dbReference type="Pumba" id="O76031"/>
<dbReference type="Antibodypedia" id="51984">
    <property type="antibodies" value="107 antibodies from 26 providers"/>
</dbReference>
<dbReference type="DNASU" id="10845"/>
<dbReference type="Ensembl" id="ENST00000300107.7">
    <property type="protein sequence ID" value="ENSP00000300107.3"/>
    <property type="gene ID" value="ENSG00000166855.9"/>
</dbReference>
<dbReference type="GeneID" id="10845"/>
<dbReference type="KEGG" id="hsa:10845"/>
<dbReference type="MANE-Select" id="ENST00000300107.7">
    <property type="protein sequence ID" value="ENSP00000300107.3"/>
    <property type="RefSeq nucleotide sequence ID" value="NM_006660.5"/>
    <property type="RefSeq protein sequence ID" value="NP_006651.2"/>
</dbReference>
<dbReference type="UCSC" id="uc002aom.4">
    <property type="organism name" value="human"/>
</dbReference>
<dbReference type="AGR" id="HGNC:2088"/>
<dbReference type="CTD" id="10845"/>
<dbReference type="DisGeNET" id="10845"/>
<dbReference type="GeneCards" id="CLPX"/>
<dbReference type="HGNC" id="HGNC:2088">
    <property type="gene designation" value="CLPX"/>
</dbReference>
<dbReference type="HPA" id="ENSG00000166855">
    <property type="expression patterns" value="Low tissue specificity"/>
</dbReference>
<dbReference type="MalaCards" id="CLPX"/>
<dbReference type="MIM" id="615611">
    <property type="type" value="gene"/>
</dbReference>
<dbReference type="MIM" id="618015">
    <property type="type" value="phenotype"/>
</dbReference>
<dbReference type="neXtProt" id="NX_O76031"/>
<dbReference type="OpenTargets" id="ENSG00000166855"/>
<dbReference type="PharmGKB" id="PA26614"/>
<dbReference type="VEuPathDB" id="HostDB:ENSG00000166855"/>
<dbReference type="eggNOG" id="KOG0745">
    <property type="taxonomic scope" value="Eukaryota"/>
</dbReference>
<dbReference type="GeneTree" id="ENSGT00390000017625"/>
<dbReference type="HOGENOM" id="CLU_014218_0_1_1"/>
<dbReference type="InParanoid" id="O76031"/>
<dbReference type="OMA" id="HRSDFTN"/>
<dbReference type="OrthoDB" id="1721884at2759"/>
<dbReference type="PAN-GO" id="O76031">
    <property type="GO annotations" value="4 GO annotations based on evolutionary models"/>
</dbReference>
<dbReference type="PhylomeDB" id="O76031"/>
<dbReference type="TreeFam" id="TF312884"/>
<dbReference type="PathwayCommons" id="O76031"/>
<dbReference type="Reactome" id="R-HSA-9837999">
    <property type="pathway name" value="Mitochondrial protein degradation"/>
</dbReference>
<dbReference type="SignaLink" id="O76031"/>
<dbReference type="BioGRID-ORCS" id="10845">
    <property type="hits" value="38 hits in 1168 CRISPR screens"/>
</dbReference>
<dbReference type="ChiTaRS" id="CLPX">
    <property type="organism name" value="human"/>
</dbReference>
<dbReference type="GenomeRNAi" id="10845"/>
<dbReference type="Pharos" id="O76031">
    <property type="development level" value="Tbio"/>
</dbReference>
<dbReference type="PRO" id="PR:O76031"/>
<dbReference type="Proteomes" id="UP000005640">
    <property type="component" value="Chromosome 15"/>
</dbReference>
<dbReference type="RNAct" id="O76031">
    <property type="molecule type" value="protein"/>
</dbReference>
<dbReference type="Bgee" id="ENSG00000166855">
    <property type="expression patterns" value="Expressed in sperm and 199 other cell types or tissues"/>
</dbReference>
<dbReference type="ExpressionAtlas" id="O76031">
    <property type="expression patterns" value="baseline and differential"/>
</dbReference>
<dbReference type="GO" id="GO:0005829">
    <property type="term" value="C:cytosol"/>
    <property type="evidence" value="ECO:0000314"/>
    <property type="project" value="HPA"/>
</dbReference>
<dbReference type="GO" id="GO:0009368">
    <property type="term" value="C:endopeptidase Clp complex"/>
    <property type="evidence" value="ECO:0000314"/>
    <property type="project" value="UniProtKB"/>
</dbReference>
<dbReference type="GO" id="GO:0009841">
    <property type="term" value="C:mitochondrial endopeptidase Clp complex"/>
    <property type="evidence" value="ECO:0000314"/>
    <property type="project" value="UniProtKB"/>
</dbReference>
<dbReference type="GO" id="GO:0005743">
    <property type="term" value="C:mitochondrial inner membrane"/>
    <property type="evidence" value="ECO:0000250"/>
    <property type="project" value="UniProtKB"/>
</dbReference>
<dbReference type="GO" id="GO:0005759">
    <property type="term" value="C:mitochondrial matrix"/>
    <property type="evidence" value="ECO:0000314"/>
    <property type="project" value="UniProtKB"/>
</dbReference>
<dbReference type="GO" id="GO:0042645">
    <property type="term" value="C:mitochondrial nucleoid"/>
    <property type="evidence" value="ECO:0000314"/>
    <property type="project" value="BHF-UCL"/>
</dbReference>
<dbReference type="GO" id="GO:0005739">
    <property type="term" value="C:mitochondrion"/>
    <property type="evidence" value="ECO:0000314"/>
    <property type="project" value="UniProtKB"/>
</dbReference>
<dbReference type="GO" id="GO:0005654">
    <property type="term" value="C:nucleoplasm"/>
    <property type="evidence" value="ECO:0000314"/>
    <property type="project" value="HPA"/>
</dbReference>
<dbReference type="GO" id="GO:0005524">
    <property type="term" value="F:ATP binding"/>
    <property type="evidence" value="ECO:0000250"/>
    <property type="project" value="UniProtKB"/>
</dbReference>
<dbReference type="GO" id="GO:0016887">
    <property type="term" value="F:ATP hydrolysis activity"/>
    <property type="evidence" value="ECO:0000314"/>
    <property type="project" value="UniProtKB"/>
</dbReference>
<dbReference type="GO" id="GO:0140662">
    <property type="term" value="F:ATP-dependent protein folding chaperone"/>
    <property type="evidence" value="ECO:0007669"/>
    <property type="project" value="InterPro"/>
</dbReference>
<dbReference type="GO" id="GO:0016504">
    <property type="term" value="F:peptidase activator activity"/>
    <property type="evidence" value="ECO:0000314"/>
    <property type="project" value="UniProtKB"/>
</dbReference>
<dbReference type="GO" id="GO:0046983">
    <property type="term" value="F:protein dimerization activity"/>
    <property type="evidence" value="ECO:0007669"/>
    <property type="project" value="InterPro"/>
</dbReference>
<dbReference type="GO" id="GO:0051082">
    <property type="term" value="F:unfolded protein binding"/>
    <property type="evidence" value="ECO:0007669"/>
    <property type="project" value="InterPro"/>
</dbReference>
<dbReference type="GO" id="GO:0008270">
    <property type="term" value="F:zinc ion binding"/>
    <property type="evidence" value="ECO:0007669"/>
    <property type="project" value="InterPro"/>
</dbReference>
<dbReference type="GO" id="GO:0046034">
    <property type="term" value="P:ATP metabolic process"/>
    <property type="evidence" value="ECO:0000314"/>
    <property type="project" value="UniProtKB"/>
</dbReference>
<dbReference type="GO" id="GO:0006508">
    <property type="term" value="P:proteolysis"/>
    <property type="evidence" value="ECO:0000314"/>
    <property type="project" value="ComplexPortal"/>
</dbReference>
<dbReference type="GO" id="GO:0051603">
    <property type="term" value="P:proteolysis involved in protein catabolic process"/>
    <property type="evidence" value="ECO:0000314"/>
    <property type="project" value="UniProtKB"/>
</dbReference>
<dbReference type="CDD" id="cd19497">
    <property type="entry name" value="RecA-like_ClpX"/>
    <property type="match status" value="1"/>
</dbReference>
<dbReference type="FunFam" id="1.10.8.60:FF:000002">
    <property type="entry name" value="ATP-dependent Clp protease ATP-binding subunit ClpX"/>
    <property type="match status" value="1"/>
</dbReference>
<dbReference type="FunFam" id="3.40.50.300:FF:000378">
    <property type="entry name" value="ATP-dependent Clp protease ATP-binding subunit clpX-like, mitochondrial"/>
    <property type="match status" value="1"/>
</dbReference>
<dbReference type="FunFam" id="3.40.50.300:FF:003247">
    <property type="entry name" value="ATP-dependent Clp protease ATP-binding subunit clpX-like, mitochondrial"/>
    <property type="match status" value="1"/>
</dbReference>
<dbReference type="Gene3D" id="1.10.8.60">
    <property type="match status" value="1"/>
</dbReference>
<dbReference type="Gene3D" id="3.40.50.300">
    <property type="entry name" value="P-loop containing nucleotide triphosphate hydrolases"/>
    <property type="match status" value="1"/>
</dbReference>
<dbReference type="InterPro" id="IPR003593">
    <property type="entry name" value="AAA+_ATPase"/>
</dbReference>
<dbReference type="InterPro" id="IPR050052">
    <property type="entry name" value="ATP-dep_Clp_protease_ClpX"/>
</dbReference>
<dbReference type="InterPro" id="IPR003959">
    <property type="entry name" value="ATPase_AAA_core"/>
</dbReference>
<dbReference type="InterPro" id="IPR019489">
    <property type="entry name" value="Clp_ATPase_C"/>
</dbReference>
<dbReference type="InterPro" id="IPR004487">
    <property type="entry name" value="Clp_protease_ATP-bd_su_ClpX"/>
</dbReference>
<dbReference type="InterPro" id="IPR027417">
    <property type="entry name" value="P-loop_NTPase"/>
</dbReference>
<dbReference type="InterPro" id="IPR010603">
    <property type="entry name" value="Znf_CppX_C4"/>
</dbReference>
<dbReference type="NCBIfam" id="TIGR00382">
    <property type="entry name" value="clpX"/>
    <property type="match status" value="1"/>
</dbReference>
<dbReference type="NCBIfam" id="NF003745">
    <property type="entry name" value="PRK05342.1"/>
    <property type="match status" value="1"/>
</dbReference>
<dbReference type="PANTHER" id="PTHR48102:SF7">
    <property type="entry name" value="ATP-DEPENDENT CLP PROTEASE ATP-BINDING SUBUNIT CLPX-LIKE, MITOCHONDRIAL"/>
    <property type="match status" value="1"/>
</dbReference>
<dbReference type="PANTHER" id="PTHR48102">
    <property type="entry name" value="ATP-DEPENDENT CLP PROTEASE ATP-BINDING SUBUNIT CLPX-LIKE, MITOCHONDRIAL-RELATED"/>
    <property type="match status" value="1"/>
</dbReference>
<dbReference type="Pfam" id="PF07724">
    <property type="entry name" value="AAA_2"/>
    <property type="match status" value="1"/>
</dbReference>
<dbReference type="Pfam" id="PF10431">
    <property type="entry name" value="ClpB_D2-small"/>
    <property type="match status" value="1"/>
</dbReference>
<dbReference type="SMART" id="SM00382">
    <property type="entry name" value="AAA"/>
    <property type="match status" value="1"/>
</dbReference>
<dbReference type="SMART" id="SM01086">
    <property type="entry name" value="ClpB_D2-small"/>
    <property type="match status" value="1"/>
</dbReference>
<dbReference type="SUPFAM" id="SSF52540">
    <property type="entry name" value="P-loop containing nucleoside triphosphate hydrolases"/>
    <property type="match status" value="1"/>
</dbReference>
<dbReference type="PROSITE" id="PS51902">
    <property type="entry name" value="CLPX_ZB"/>
    <property type="match status" value="1"/>
</dbReference>
<accession>O76031</accession>
<accession>A1L428</accession>
<accession>A8K8F1</accession>
<accession>B9EGI8</accession>
<accession>Q9H4D9</accession>
<keyword id="KW-0007">Acetylation</keyword>
<keyword id="KW-0067">ATP-binding</keyword>
<keyword id="KW-0143">Chaperone</keyword>
<keyword id="KW-0225">Disease variant</keyword>
<keyword id="KW-0378">Hydrolase</keyword>
<keyword id="KW-0479">Metal-binding</keyword>
<keyword id="KW-0496">Mitochondrion</keyword>
<keyword id="KW-1135">Mitochondrion nucleoid</keyword>
<keyword id="KW-0547">Nucleotide-binding</keyword>
<keyword id="KW-0597">Phosphoprotein</keyword>
<keyword id="KW-1267">Proteomics identification</keyword>
<keyword id="KW-1185">Reference proteome</keyword>
<keyword id="KW-0809">Transit peptide</keyword>
<keyword id="KW-0862">Zinc</keyword>
<organism>
    <name type="scientific">Homo sapiens</name>
    <name type="common">Human</name>
    <dbReference type="NCBI Taxonomy" id="9606"/>
    <lineage>
        <taxon>Eukaryota</taxon>
        <taxon>Metazoa</taxon>
        <taxon>Chordata</taxon>
        <taxon>Craniata</taxon>
        <taxon>Vertebrata</taxon>
        <taxon>Euteleostomi</taxon>
        <taxon>Mammalia</taxon>
        <taxon>Eutheria</taxon>
        <taxon>Euarchontoglires</taxon>
        <taxon>Primates</taxon>
        <taxon>Haplorrhini</taxon>
        <taxon>Catarrhini</taxon>
        <taxon>Hominidae</taxon>
        <taxon>Homo</taxon>
    </lineage>
</organism>
<proteinExistence type="evidence at protein level"/>
<evidence type="ECO:0000250" key="1"/>
<evidence type="ECO:0000255" key="2"/>
<evidence type="ECO:0000255" key="3">
    <source>
        <dbReference type="PROSITE-ProRule" id="PRU01250"/>
    </source>
</evidence>
<evidence type="ECO:0000256" key="4">
    <source>
        <dbReference type="SAM" id="MobiDB-lite"/>
    </source>
</evidence>
<evidence type="ECO:0000269" key="5">
    <source>
    </source>
</evidence>
<evidence type="ECO:0000269" key="6">
    <source>
    </source>
</evidence>
<evidence type="ECO:0000269" key="7">
    <source>
    </source>
</evidence>
<evidence type="ECO:0000269" key="8">
    <source>
    </source>
</evidence>
<evidence type="ECO:0000269" key="9">
    <source>
    </source>
</evidence>
<evidence type="ECO:0000269" key="10">
    <source>
    </source>
</evidence>
<evidence type="ECO:0000269" key="11">
    <source>
    </source>
</evidence>
<evidence type="ECO:0000305" key="12"/>
<evidence type="ECO:0000312" key="13">
    <source>
        <dbReference type="HGNC" id="HGNC:2088"/>
    </source>
</evidence>
<evidence type="ECO:0007744" key="14">
    <source>
    </source>
</evidence>
<evidence type="ECO:0007744" key="15">
    <source>
    </source>
</evidence>
<evidence type="ECO:0007744" key="16">
    <source>
    </source>
</evidence>
<comment type="function">
    <text evidence="6 9 10 11">ATP-dependent chaperone that functions as an unfoldase. As part of the ClpXP protease complex, it recognizes specific protein substrates, unfolds them using energy derived from ATP hydrolysis, and then translocates them to the proteolytic subunit (CLPP) of the ClpXP complex for degradation (PubMed:11923310, PubMed:22710082, PubMed:28874591). Thanks to its chaperone activity, it also functions in the incorporation of the pyridoxal phosphate cofactor into 5-aminolevulinate synthase, thereby activating 5-aminolevulinate (ALA) synthesis, the first step in heme biosynthesis (PubMed:28874591). This chaperone is also involved in the control of mtDNA nucleoid distribution, by regulating mitochondrial transcription factor A (TFAM) activity (PubMed:22841477).</text>
</comment>
<comment type="catalytic activity">
    <reaction evidence="9 11">
        <text>ATP + H2O = ADP + phosphate + H(+)</text>
        <dbReference type="Rhea" id="RHEA:13065"/>
        <dbReference type="ChEBI" id="CHEBI:15377"/>
        <dbReference type="ChEBI" id="CHEBI:15378"/>
        <dbReference type="ChEBI" id="CHEBI:30616"/>
        <dbReference type="ChEBI" id="CHEBI:43474"/>
        <dbReference type="ChEBI" id="CHEBI:456216"/>
        <dbReference type="EC" id="3.6.4.10"/>
    </reaction>
    <physiologicalReaction direction="left-to-right" evidence="9 11">
        <dbReference type="Rhea" id="RHEA:13066"/>
    </physiologicalReaction>
</comment>
<comment type="subunit">
    <text evidence="6 7 8 9 10">Homohexamer that forms a ring structure; this hexamerization requires ATP binding. Component of the ClpXP complex formed by the assembly of two CLPP heptameric rings with two CLPX hexameric rings, giving rise to a symmetrical structure with two central CLPP rings flanked by a CLPX ring at either end of the complex. Interacts with TFAM (PubMed:22841477).</text>
</comment>
<comment type="interaction">
    <interactant intactId="EBI-1052667">
        <id>O76031</id>
    </interactant>
    <interactant intactId="EBI-25815820">
        <id>PRO_0000005516</id>
        <label>CLPP</label>
        <dbReference type="UniProtKB" id="Q16740"/>
    </interactant>
    <organismsDiffer>false</organismsDiffer>
    <experiments>2</experiments>
</comment>
<comment type="subcellular location">
    <subcellularLocation>
        <location evidence="5">Mitochondrion</location>
    </subcellularLocation>
    <subcellularLocation>
        <location evidence="10">Mitochondrion matrix</location>
        <location evidence="10">Mitochondrion nucleoid</location>
    </subcellularLocation>
</comment>
<comment type="tissue specificity">
    <text evidence="5">Higher expression in skeletal muscle and heart and to a lesser extent in liver, brain, placenta, lung, kidney and pancreas.</text>
</comment>
<comment type="disease" evidence="11">
    <disease id="DI-05274">
        <name>Protoporphyria, erythropoietic, 2</name>
        <acronym>EPP2</acronym>
        <description>An autosomal dominant form of porphyria with onset in infancy. Porphyrias are inherited defects in the biosynthesis of heme, resulting in the accumulation and increased excretion of porphyrins or porphyrin precursors. They are classified as erythropoietic or hepatic, depending on whether the enzyme deficiency occurs in red blood cells or in the liver. Erythropoietic protoporphyria is marked by excessive protoporphyrin in erythrocytes, plasma, liver and feces, and by widely varying photosensitive skin changes ranging from a burning or pruritic sensation to erythema, edema and wheals.</description>
        <dbReference type="MIM" id="618015"/>
    </disease>
    <text>The disease may be caused by variants affecting the gene represented in this entry.</text>
</comment>
<comment type="similarity">
    <text evidence="3">Belongs to the ClpX chaperone family.</text>
</comment>
<gene>
    <name evidence="13" type="primary">CLPX</name>
</gene>
<reference key="1">
    <citation type="journal article" date="2000" name="Mamm. Genome">
        <title>Human and mouse mitochondrial orthologs of bacterial ClpX.</title>
        <authorList>
            <person name="Corydon T.J."/>
            <person name="Wilsbech M."/>
            <person name="Jespersgaard C."/>
            <person name="Andresen B.S."/>
            <person name="Borglum A.D."/>
            <person name="Pedersen S."/>
            <person name="Bolund L."/>
            <person name="Gregersen N."/>
            <person name="Bross P."/>
        </authorList>
    </citation>
    <scope>NUCLEOTIDE SEQUENCE [GENOMIC DNA / MRNA]</scope>
    <scope>SUBCELLULAR LOCATION</scope>
    <scope>TISSUE SPECIFICITY</scope>
    <source>
        <tissue>Skeletal muscle</tissue>
    </source>
</reference>
<reference key="2">
    <citation type="journal article" date="2004" name="Nat. Genet.">
        <title>Complete sequencing and characterization of 21,243 full-length human cDNAs.</title>
        <authorList>
            <person name="Ota T."/>
            <person name="Suzuki Y."/>
            <person name="Nishikawa T."/>
            <person name="Otsuki T."/>
            <person name="Sugiyama T."/>
            <person name="Irie R."/>
            <person name="Wakamatsu A."/>
            <person name="Hayashi K."/>
            <person name="Sato H."/>
            <person name="Nagai K."/>
            <person name="Kimura K."/>
            <person name="Makita H."/>
            <person name="Sekine M."/>
            <person name="Obayashi M."/>
            <person name="Nishi T."/>
            <person name="Shibahara T."/>
            <person name="Tanaka T."/>
            <person name="Ishii S."/>
            <person name="Yamamoto J."/>
            <person name="Saito K."/>
            <person name="Kawai Y."/>
            <person name="Isono Y."/>
            <person name="Nakamura Y."/>
            <person name="Nagahari K."/>
            <person name="Murakami K."/>
            <person name="Yasuda T."/>
            <person name="Iwayanagi T."/>
            <person name="Wagatsuma M."/>
            <person name="Shiratori A."/>
            <person name="Sudo H."/>
            <person name="Hosoiri T."/>
            <person name="Kaku Y."/>
            <person name="Kodaira H."/>
            <person name="Kondo H."/>
            <person name="Sugawara M."/>
            <person name="Takahashi M."/>
            <person name="Kanda K."/>
            <person name="Yokoi T."/>
            <person name="Furuya T."/>
            <person name="Kikkawa E."/>
            <person name="Omura Y."/>
            <person name="Abe K."/>
            <person name="Kamihara K."/>
            <person name="Katsuta N."/>
            <person name="Sato K."/>
            <person name="Tanikawa M."/>
            <person name="Yamazaki M."/>
            <person name="Ninomiya K."/>
            <person name="Ishibashi T."/>
            <person name="Yamashita H."/>
            <person name="Murakawa K."/>
            <person name="Fujimori K."/>
            <person name="Tanai H."/>
            <person name="Kimata M."/>
            <person name="Watanabe M."/>
            <person name="Hiraoka S."/>
            <person name="Chiba Y."/>
            <person name="Ishida S."/>
            <person name="Ono Y."/>
            <person name="Takiguchi S."/>
            <person name="Watanabe S."/>
            <person name="Yosida M."/>
            <person name="Hotuta T."/>
            <person name="Kusano J."/>
            <person name="Kanehori K."/>
            <person name="Takahashi-Fujii A."/>
            <person name="Hara H."/>
            <person name="Tanase T.-O."/>
            <person name="Nomura Y."/>
            <person name="Togiya S."/>
            <person name="Komai F."/>
            <person name="Hara R."/>
            <person name="Takeuchi K."/>
            <person name="Arita M."/>
            <person name="Imose N."/>
            <person name="Musashino K."/>
            <person name="Yuuki H."/>
            <person name="Oshima A."/>
            <person name="Sasaki N."/>
            <person name="Aotsuka S."/>
            <person name="Yoshikawa Y."/>
            <person name="Matsunawa H."/>
            <person name="Ichihara T."/>
            <person name="Shiohata N."/>
            <person name="Sano S."/>
            <person name="Moriya S."/>
            <person name="Momiyama H."/>
            <person name="Satoh N."/>
            <person name="Takami S."/>
            <person name="Terashima Y."/>
            <person name="Suzuki O."/>
            <person name="Nakagawa S."/>
            <person name="Senoh A."/>
            <person name="Mizoguchi H."/>
            <person name="Goto Y."/>
            <person name="Shimizu F."/>
            <person name="Wakebe H."/>
            <person name="Hishigaki H."/>
            <person name="Watanabe T."/>
            <person name="Sugiyama A."/>
            <person name="Takemoto M."/>
            <person name="Kawakami B."/>
            <person name="Yamazaki M."/>
            <person name="Watanabe K."/>
            <person name="Kumagai A."/>
            <person name="Itakura S."/>
            <person name="Fukuzumi Y."/>
            <person name="Fujimori Y."/>
            <person name="Komiyama M."/>
            <person name="Tashiro H."/>
            <person name="Tanigami A."/>
            <person name="Fujiwara T."/>
            <person name="Ono T."/>
            <person name="Yamada K."/>
            <person name="Fujii Y."/>
            <person name="Ozaki K."/>
            <person name="Hirao M."/>
            <person name="Ohmori Y."/>
            <person name="Kawabata A."/>
            <person name="Hikiji T."/>
            <person name="Kobatake N."/>
            <person name="Inagaki H."/>
            <person name="Ikema Y."/>
            <person name="Okamoto S."/>
            <person name="Okitani R."/>
            <person name="Kawakami T."/>
            <person name="Noguchi S."/>
            <person name="Itoh T."/>
            <person name="Shigeta K."/>
            <person name="Senba T."/>
            <person name="Matsumura K."/>
            <person name="Nakajima Y."/>
            <person name="Mizuno T."/>
            <person name="Morinaga M."/>
            <person name="Sasaki M."/>
            <person name="Togashi T."/>
            <person name="Oyama M."/>
            <person name="Hata H."/>
            <person name="Watanabe M."/>
            <person name="Komatsu T."/>
            <person name="Mizushima-Sugano J."/>
            <person name="Satoh T."/>
            <person name="Shirai Y."/>
            <person name="Takahashi Y."/>
            <person name="Nakagawa K."/>
            <person name="Okumura K."/>
            <person name="Nagase T."/>
            <person name="Nomura N."/>
            <person name="Kikuchi H."/>
            <person name="Masuho Y."/>
            <person name="Yamashita R."/>
            <person name="Nakai K."/>
            <person name="Yada T."/>
            <person name="Nakamura Y."/>
            <person name="Ohara O."/>
            <person name="Isogai T."/>
            <person name="Sugano S."/>
        </authorList>
    </citation>
    <scope>NUCLEOTIDE SEQUENCE [LARGE SCALE MRNA]</scope>
    <source>
        <tissue>Testis</tissue>
    </source>
</reference>
<reference key="3">
    <citation type="submission" date="2005-07" db="EMBL/GenBank/DDBJ databases">
        <authorList>
            <person name="Mural R.J."/>
            <person name="Istrail S."/>
            <person name="Sutton G.G."/>
            <person name="Florea L."/>
            <person name="Halpern A.L."/>
            <person name="Mobarry C.M."/>
            <person name="Lippert R."/>
            <person name="Walenz B."/>
            <person name="Shatkay H."/>
            <person name="Dew I."/>
            <person name="Miller J.R."/>
            <person name="Flanigan M.J."/>
            <person name="Edwards N.J."/>
            <person name="Bolanos R."/>
            <person name="Fasulo D."/>
            <person name="Halldorsson B.V."/>
            <person name="Hannenhalli S."/>
            <person name="Turner R."/>
            <person name="Yooseph S."/>
            <person name="Lu F."/>
            <person name="Nusskern D.R."/>
            <person name="Shue B.C."/>
            <person name="Zheng X.H."/>
            <person name="Zhong F."/>
            <person name="Delcher A.L."/>
            <person name="Huson D.H."/>
            <person name="Kravitz S.A."/>
            <person name="Mouchard L."/>
            <person name="Reinert K."/>
            <person name="Remington K.A."/>
            <person name="Clark A.G."/>
            <person name="Waterman M.S."/>
            <person name="Eichler E.E."/>
            <person name="Adams M.D."/>
            <person name="Hunkapiller M.W."/>
            <person name="Myers E.W."/>
            <person name="Venter J.C."/>
        </authorList>
    </citation>
    <scope>NUCLEOTIDE SEQUENCE [LARGE SCALE GENOMIC DNA]</scope>
</reference>
<reference key="4">
    <citation type="journal article" date="2004" name="Genome Res.">
        <title>The status, quality, and expansion of the NIH full-length cDNA project: the Mammalian Gene Collection (MGC).</title>
        <authorList>
            <consortium name="The MGC Project Team"/>
        </authorList>
    </citation>
    <scope>NUCLEOTIDE SEQUENCE [LARGE SCALE MRNA]</scope>
    <source>
        <tissue>Brain</tissue>
        <tissue>Testis</tissue>
    </source>
</reference>
<reference key="5">
    <citation type="journal article" date="2002" name="J. Biol. Chem.">
        <title>Functional proteolytic complexes of the human mitochondrial ATP-dependent protease, hClpXP.</title>
        <authorList>
            <person name="Kang S.G."/>
            <person name="Ortega J."/>
            <person name="Singh S.K."/>
            <person name="Wang N."/>
            <person name="Huang N.N."/>
            <person name="Steven A.C."/>
            <person name="Maurizi M.R."/>
        </authorList>
    </citation>
    <scope>FUNCTION</scope>
    <scope>SUBUNIT</scope>
</reference>
<reference key="6">
    <citation type="journal article" date="2004" name="J. Struct. Biol.">
        <title>Crystallography and mutagenesis point to an essential role for the N-terminus of human mitochondrial ClpP.</title>
        <authorList>
            <person name="Kang S.G."/>
            <person name="Maurizi M.R."/>
            <person name="Thompson M."/>
            <person name="Mueser T."/>
            <person name="Ahvazi B."/>
        </authorList>
    </citation>
    <scope>SUBUNIT</scope>
    <scope>INTERACTION WITH CLPP</scope>
</reference>
<reference key="7">
    <citation type="journal article" date="2005" name="J. Biol. Chem.">
        <title>Human mitochondrial ClpP is a stable heptamer that assembles into a tetradecamer in the presence of ClpX.</title>
        <authorList>
            <person name="Kang S.G."/>
            <person name="Dimitrova M.N."/>
            <person name="Ortega J."/>
            <person name="Ginsburg A."/>
            <person name="Maurizi M.R."/>
        </authorList>
    </citation>
    <scope>SUBUNIT</scope>
    <scope>IDENTIFICATION IN A COMPLEX WITH CLPP</scope>
</reference>
<reference key="8">
    <citation type="journal article" date="2006" name="Nat. Biotechnol.">
        <title>A probability-based approach for high-throughput protein phosphorylation analysis and site localization.</title>
        <authorList>
            <person name="Beausoleil S.A."/>
            <person name="Villen J."/>
            <person name="Gerber S.A."/>
            <person name="Rush J."/>
            <person name="Gygi S.P."/>
        </authorList>
    </citation>
    <scope>IDENTIFICATION BY MASS SPECTROMETRY [LARGE SCALE ANALYSIS]</scope>
    <source>
        <tissue>Cervix carcinoma</tissue>
    </source>
</reference>
<reference key="9">
    <citation type="journal article" date="2009" name="Sci. Signal.">
        <title>Quantitative phosphoproteomic analysis of T cell receptor signaling reveals system-wide modulation of protein-protein interactions.</title>
        <authorList>
            <person name="Mayya V."/>
            <person name="Lundgren D.H."/>
            <person name="Hwang S.-I."/>
            <person name="Rezaul K."/>
            <person name="Wu L."/>
            <person name="Eng J.K."/>
            <person name="Rodionov V."/>
            <person name="Han D.K."/>
        </authorList>
    </citation>
    <scope>PHOSPHORYLATION [LARGE SCALE ANALYSIS] AT SER-617</scope>
    <scope>IDENTIFICATION BY MASS SPECTROMETRY [LARGE SCALE ANALYSIS]</scope>
    <source>
        <tissue>Leukemic T-cell</tissue>
    </source>
</reference>
<reference key="10">
    <citation type="journal article" date="2009" name="Science">
        <title>Lysine acetylation targets protein complexes and co-regulates major cellular functions.</title>
        <authorList>
            <person name="Choudhary C."/>
            <person name="Kumar C."/>
            <person name="Gnad F."/>
            <person name="Nielsen M.L."/>
            <person name="Rehman M."/>
            <person name="Walther T.C."/>
            <person name="Olsen J.V."/>
            <person name="Mann M."/>
        </authorList>
    </citation>
    <scope>ACETYLATION [LARGE SCALE ANALYSIS] AT LYS-437</scope>
    <scope>IDENTIFICATION BY MASS SPECTROMETRY [LARGE SCALE ANALYSIS]</scope>
</reference>
<reference key="11">
    <citation type="journal article" date="2011" name="BMC Syst. Biol.">
        <title>Initial characterization of the human central proteome.</title>
        <authorList>
            <person name="Burkard T.R."/>
            <person name="Planyavsky M."/>
            <person name="Kaupe I."/>
            <person name="Breitwieser F.P."/>
            <person name="Buerckstuemmer T."/>
            <person name="Bennett K.L."/>
            <person name="Superti-Furga G."/>
            <person name="Colinge J."/>
        </authorList>
    </citation>
    <scope>IDENTIFICATION BY MASS SPECTROMETRY [LARGE SCALE ANALYSIS]</scope>
</reference>
<reference key="12">
    <citation type="journal article" date="2012" name="Exp. Cell Res.">
        <title>Maintenance of mitochondrial genome distribution by mitochondrial AAA+ protein ClpX.</title>
        <authorList>
            <person name="Kasashima K."/>
            <person name="Sumitani M."/>
            <person name="Endo H."/>
        </authorList>
    </citation>
    <scope>FUNCTION</scope>
    <scope>SUBCELLULAR LOCATION</scope>
    <scope>INTERACTION WITH TFAM</scope>
</reference>
<reference key="13">
    <citation type="journal article" date="2012" name="J. Struct. Biol.">
        <title>Substrate recognition and processing by a Walker B mutant of the human mitochondrial AAA+ protein CLPX.</title>
        <authorList>
            <person name="Lowth B.R."/>
            <person name="Kirstein-Miles J."/>
            <person name="Saiyed T."/>
            <person name="Broetz-Oesterhelt H."/>
            <person name="Morimoto R.I."/>
            <person name="Truscott K.N."/>
            <person name="Dougan D.A."/>
        </authorList>
    </citation>
    <scope>FUNCTION</scope>
    <scope>CATALYTIC ACTIVITY</scope>
    <scope>MUTAGENESIS OF GLU-359</scope>
    <scope>SUBUNIT</scope>
    <scope>INTERACTION WITH CLPP</scope>
</reference>
<reference key="14">
    <citation type="journal article" date="2013" name="J. Proteome Res.">
        <title>Toward a comprehensive characterization of a human cancer cell phosphoproteome.</title>
        <authorList>
            <person name="Zhou H."/>
            <person name="Di Palma S."/>
            <person name="Preisinger C."/>
            <person name="Peng M."/>
            <person name="Polat A.N."/>
            <person name="Heck A.J."/>
            <person name="Mohammed S."/>
        </authorList>
    </citation>
    <scope>PHOSPHORYLATION [LARGE SCALE ANALYSIS] AT SER-617</scope>
    <scope>IDENTIFICATION BY MASS SPECTROMETRY [LARGE SCALE ANALYSIS]</scope>
    <source>
        <tissue>Erythroleukemia</tissue>
    </source>
</reference>
<reference key="15">
    <citation type="journal article" date="2014" name="J. Proteomics">
        <title>An enzyme assisted RP-RPLC approach for in-depth analysis of human liver phosphoproteome.</title>
        <authorList>
            <person name="Bian Y."/>
            <person name="Song C."/>
            <person name="Cheng K."/>
            <person name="Dong M."/>
            <person name="Wang F."/>
            <person name="Huang J."/>
            <person name="Sun D."/>
            <person name="Wang L."/>
            <person name="Ye M."/>
            <person name="Zou H."/>
        </authorList>
    </citation>
    <scope>IDENTIFICATION BY MASS SPECTROMETRY [LARGE SCALE ANALYSIS]</scope>
    <source>
        <tissue>Liver</tissue>
    </source>
</reference>
<reference key="16">
    <citation type="journal article" date="2015" name="Cell">
        <title>Mitochondrial ClpX activates a key enzyme for heme biosynthesis and erythropoiesis.</title>
        <authorList>
            <person name="Kardon J.R."/>
            <person name="Yien Y.Y."/>
            <person name="Huston N.C."/>
            <person name="Branco D.S."/>
            <person name="Hildick-Smith G.J."/>
            <person name="Rhee K.Y."/>
            <person name="Paw B.H."/>
            <person name="Baker T.A."/>
        </authorList>
    </citation>
    <scope>FUNCTION</scope>
</reference>
<reference key="17">
    <citation type="journal article" date="2015" name="Proteomics">
        <title>N-terminome analysis of the human mitochondrial proteome.</title>
        <authorList>
            <person name="Vaca Jacome A.S."/>
            <person name="Rabilloud T."/>
            <person name="Schaeffer-Reiss C."/>
            <person name="Rompais M."/>
            <person name="Ayoub D."/>
            <person name="Lane L."/>
            <person name="Bairoch A."/>
            <person name="Van Dorsselaer A."/>
            <person name="Carapito C."/>
        </authorList>
    </citation>
    <scope>IDENTIFICATION BY MASS SPECTROMETRY [LARGE SCALE ANALYSIS]</scope>
</reference>
<reference key="18">
    <citation type="journal article" date="2017" name="Proc. Natl. Acad. Sci. U.S.A.">
        <title>Mutation in human CLPX elevates levels of delta-aminolevulinate synthase and protoporphyrin IX to promote erythropoietic protoporphyria.</title>
        <authorList>
            <person name="Yien Y.Y."/>
            <person name="Ducamp S."/>
            <person name="van der Vorm L.N."/>
            <person name="Kardon J.R."/>
            <person name="Manceau H."/>
            <person name="Kannengiesser C."/>
            <person name="Bergonia H.A."/>
            <person name="Kafina M.D."/>
            <person name="Karim Z."/>
            <person name="Gouya L."/>
            <person name="Baker T.A."/>
            <person name="Puy H."/>
            <person name="Phillips J.D."/>
            <person name="Nicolas G."/>
            <person name="Paw B.H."/>
        </authorList>
    </citation>
    <scope>INVOLVEMENT IN EPP2</scope>
    <scope>FUNCTION</scope>
    <scope>CATALYTIC ACTIVITY</scope>
    <scope>VARIANT EPP2 ASP-298</scope>
    <scope>CHARACTERIZATION OF VARIANT EPP2 ASP-298</scope>
</reference>
<name>CLPX_HUMAN</name>
<sequence length="633" mass="69224">MPSCGACTCGAAAVRLITSSLASAQRGISGGRIHMSVLGRLGTFETQILQRAPLRSFTETPAYFASKDGISKDGSGDGNKKSASEGSSKKSGSGNSGKGGNQLRCPKCGDLCTHVETFVSSTRFVKCEKCHHFFVVLSEADSKKSIIKEPESAAEAVKLAFQQKPPPPPKKIYNYLDKYVVGQSFAKKVLSVAVYNHYKRIYNNIPANLRQQAEVEKQTSLTPRELEIRRREDEYRFTKLLQIAGISPHGNALGASMQQQVNQQIPQEKRGGEVLDSSHDDIKLEKSNILLLGPTGSGKTLLAQTLAKCLDVPFAICDCTTLTQAGYVGEDIESVIAKLLQDANYNVEKAQQGIVFLDEVDKIGSVPGIHQLRDVGGEGVQQGLLKLLEGTIVNVPEKNSRKLRGETVQVDTTNILFVASGAFNGLDRIISRRKNEKYLGFGTPSNLGKGRRAAAAADLANRSGESNTHQDIEEKDRLLRHVEARDLIEFGMIPEFVGRLPVVVPLHSLDEKTLVQILTEPRNAVIPQYQALFSMDKCELNVTEDALKAIARLALERKTGARGLRSIMEKLLLEPMFEVPNSDIVCVEVDKEVVEGKKEPGYIRAPTKESSEEEYDSGVEEEGWPRQADAANS</sequence>
<feature type="transit peptide" description="Mitochondrion" evidence="2">
    <location>
        <begin position="1"/>
        <end position="56"/>
    </location>
</feature>
<feature type="chain" id="PRO_0000005518" description="ATP-dependent clpX-like chaperone, mitochondrial">
    <location>
        <begin position="57"/>
        <end position="633"/>
    </location>
</feature>
<feature type="domain" description="ClpX-type ZB" evidence="3">
    <location>
        <begin position="93"/>
        <end position="146"/>
    </location>
</feature>
<feature type="region of interest" description="Disordered" evidence="4">
    <location>
        <begin position="68"/>
        <end position="100"/>
    </location>
</feature>
<feature type="region of interest" description="Disordered" evidence="4">
    <location>
        <begin position="598"/>
        <end position="633"/>
    </location>
</feature>
<feature type="compositionally biased region" description="Basic and acidic residues" evidence="4">
    <location>
        <begin position="69"/>
        <end position="83"/>
    </location>
</feature>
<feature type="compositionally biased region" description="Low complexity" evidence="4">
    <location>
        <begin position="84"/>
        <end position="93"/>
    </location>
</feature>
<feature type="compositionally biased region" description="Basic and acidic residues" evidence="4">
    <location>
        <begin position="598"/>
        <end position="610"/>
    </location>
</feature>
<feature type="compositionally biased region" description="Acidic residues" evidence="4">
    <location>
        <begin position="611"/>
        <end position="622"/>
    </location>
</feature>
<feature type="binding site" evidence="3">
    <location>
        <position position="105"/>
    </location>
    <ligand>
        <name>Zn(2+)</name>
        <dbReference type="ChEBI" id="CHEBI:29105"/>
    </ligand>
</feature>
<feature type="binding site" evidence="3">
    <location>
        <position position="108"/>
    </location>
    <ligand>
        <name>Zn(2+)</name>
        <dbReference type="ChEBI" id="CHEBI:29105"/>
    </ligand>
</feature>
<feature type="binding site" evidence="3">
    <location>
        <position position="127"/>
    </location>
    <ligand>
        <name>Zn(2+)</name>
        <dbReference type="ChEBI" id="CHEBI:29105"/>
    </ligand>
</feature>
<feature type="binding site" evidence="3">
    <location>
        <position position="130"/>
    </location>
    <ligand>
        <name>Zn(2+)</name>
        <dbReference type="ChEBI" id="CHEBI:29105"/>
    </ligand>
</feature>
<feature type="binding site" evidence="1">
    <location>
        <begin position="294"/>
        <end position="301"/>
    </location>
    <ligand>
        <name>ATP</name>
        <dbReference type="ChEBI" id="CHEBI:30616"/>
    </ligand>
</feature>
<feature type="modified residue" description="N6-acetyllysine" evidence="14">
    <location>
        <position position="437"/>
    </location>
</feature>
<feature type="modified residue" description="Phosphoserine" evidence="15 16">
    <location>
        <position position="617"/>
    </location>
</feature>
<feature type="sequence variant" id="VAR_081001" description="In EPP2; results in decreased ATP hydrolysis; cells with the mutant protein show increased ALA levels and accumulation of the heme biosynthesis intermediate protoporphyrin IX; dbSNP:rs1555412542." evidence="11">
    <original>G</original>
    <variation>D</variation>
    <location>
        <position position="298"/>
    </location>
</feature>
<feature type="sequence variant" id="VAR_048826" description="In dbSNP:rs35754835.">
    <original>I</original>
    <variation>T</variation>
    <location>
        <position position="488"/>
    </location>
</feature>
<feature type="mutagenesis site" description="Abolishes ATP hydrolysis." evidence="9">
    <original>E</original>
    <variation>A</variation>
    <location>
        <position position="359"/>
    </location>
</feature>
<feature type="sequence conflict" description="In Ref. 2; BAF85005." evidence="12" ref="2">
    <original>L</original>
    <variation>P</variation>
    <location>
        <position position="21"/>
    </location>
</feature>